<sequence length="266" mass="28723">MDISASTDRLLLVVEIGNSSTSFVVFQGDQSLALQKVATNLLTTVDGVAASVEPIFAAHPMLVDAVVCSVVPQAEEAVVTYLHGSITGKVMQVNSALKLPFTLAYEDVTTFGADRLALCAWCCLSHTAYAFIALDIGTACTIDVLNSKLHYLGGMIMPGLELMARSLHEHTARLPLVDVSTVSLSLLGNSTTECMQLGIVWNFTLGLEKMIESIKMYLEYEEHDREILLVATGGAAPFVTSLFTMQCQVEELAVAHGARLLFSYNQ</sequence>
<keyword id="KW-0067">ATP-binding</keyword>
<keyword id="KW-0173">Coenzyme A biosynthesis</keyword>
<keyword id="KW-0963">Cytoplasm</keyword>
<keyword id="KW-0418">Kinase</keyword>
<keyword id="KW-0479">Metal-binding</keyword>
<keyword id="KW-0547">Nucleotide-binding</keyword>
<keyword id="KW-0630">Potassium</keyword>
<keyword id="KW-0808">Transferase</keyword>
<protein>
    <recommendedName>
        <fullName evidence="1">Type III pantothenate kinase</fullName>
        <ecNumber evidence="1">2.7.1.33</ecNumber>
    </recommendedName>
    <alternativeName>
        <fullName evidence="1">PanK-III</fullName>
    </alternativeName>
    <alternativeName>
        <fullName evidence="1">Pantothenic acid kinase</fullName>
    </alternativeName>
</protein>
<accession>Q3AR95</accession>
<gene>
    <name evidence="1" type="primary">coaX</name>
    <name type="ordered locus">Cag_1218</name>
</gene>
<comment type="function">
    <text evidence="1">Catalyzes the phosphorylation of pantothenate (Pan), the first step in CoA biosynthesis.</text>
</comment>
<comment type="catalytic activity">
    <reaction evidence="1">
        <text>(R)-pantothenate + ATP = (R)-4'-phosphopantothenate + ADP + H(+)</text>
        <dbReference type="Rhea" id="RHEA:16373"/>
        <dbReference type="ChEBI" id="CHEBI:10986"/>
        <dbReference type="ChEBI" id="CHEBI:15378"/>
        <dbReference type="ChEBI" id="CHEBI:29032"/>
        <dbReference type="ChEBI" id="CHEBI:30616"/>
        <dbReference type="ChEBI" id="CHEBI:456216"/>
        <dbReference type="EC" id="2.7.1.33"/>
    </reaction>
</comment>
<comment type="cofactor">
    <cofactor evidence="1">
        <name>NH4(+)</name>
        <dbReference type="ChEBI" id="CHEBI:28938"/>
    </cofactor>
    <cofactor evidence="1">
        <name>K(+)</name>
        <dbReference type="ChEBI" id="CHEBI:29103"/>
    </cofactor>
    <text evidence="1">A monovalent cation. Ammonium or potassium.</text>
</comment>
<comment type="pathway">
    <text evidence="1">Cofactor biosynthesis; coenzyme A biosynthesis; CoA from (R)-pantothenate: step 1/5.</text>
</comment>
<comment type="subunit">
    <text evidence="1">Homodimer.</text>
</comment>
<comment type="subcellular location">
    <subcellularLocation>
        <location evidence="1">Cytoplasm</location>
    </subcellularLocation>
</comment>
<comment type="similarity">
    <text evidence="1">Belongs to the type III pantothenate kinase family.</text>
</comment>
<name>COAX_CHLCH</name>
<organism>
    <name type="scientific">Chlorobium chlorochromatii (strain CaD3)</name>
    <dbReference type="NCBI Taxonomy" id="340177"/>
    <lineage>
        <taxon>Bacteria</taxon>
        <taxon>Pseudomonadati</taxon>
        <taxon>Chlorobiota</taxon>
        <taxon>Chlorobiia</taxon>
        <taxon>Chlorobiales</taxon>
        <taxon>Chlorobiaceae</taxon>
        <taxon>Chlorobium/Pelodictyon group</taxon>
        <taxon>Chlorobium</taxon>
    </lineage>
</organism>
<evidence type="ECO:0000255" key="1">
    <source>
        <dbReference type="HAMAP-Rule" id="MF_01274"/>
    </source>
</evidence>
<dbReference type="EC" id="2.7.1.33" evidence="1"/>
<dbReference type="EMBL" id="CP000108">
    <property type="protein sequence ID" value="ABB28480.1"/>
    <property type="molecule type" value="Genomic_DNA"/>
</dbReference>
<dbReference type="SMR" id="Q3AR95"/>
<dbReference type="STRING" id="340177.Cag_1218"/>
<dbReference type="KEGG" id="cch:Cag_1218"/>
<dbReference type="eggNOG" id="COG1521">
    <property type="taxonomic scope" value="Bacteria"/>
</dbReference>
<dbReference type="HOGENOM" id="CLU_066627_1_0_10"/>
<dbReference type="OrthoDB" id="9804707at2"/>
<dbReference type="UniPathway" id="UPA00241">
    <property type="reaction ID" value="UER00352"/>
</dbReference>
<dbReference type="GO" id="GO:0005737">
    <property type="term" value="C:cytoplasm"/>
    <property type="evidence" value="ECO:0007669"/>
    <property type="project" value="UniProtKB-SubCell"/>
</dbReference>
<dbReference type="GO" id="GO:0005524">
    <property type="term" value="F:ATP binding"/>
    <property type="evidence" value="ECO:0007669"/>
    <property type="project" value="UniProtKB-UniRule"/>
</dbReference>
<dbReference type="GO" id="GO:0046872">
    <property type="term" value="F:metal ion binding"/>
    <property type="evidence" value="ECO:0007669"/>
    <property type="project" value="UniProtKB-KW"/>
</dbReference>
<dbReference type="GO" id="GO:0004594">
    <property type="term" value="F:pantothenate kinase activity"/>
    <property type="evidence" value="ECO:0007669"/>
    <property type="project" value="UniProtKB-UniRule"/>
</dbReference>
<dbReference type="GO" id="GO:0015937">
    <property type="term" value="P:coenzyme A biosynthetic process"/>
    <property type="evidence" value="ECO:0007669"/>
    <property type="project" value="UniProtKB-UniRule"/>
</dbReference>
<dbReference type="CDD" id="cd24015">
    <property type="entry name" value="ASKHA_NBD_PanK-III"/>
    <property type="match status" value="1"/>
</dbReference>
<dbReference type="Gene3D" id="3.30.420.40">
    <property type="match status" value="2"/>
</dbReference>
<dbReference type="HAMAP" id="MF_01274">
    <property type="entry name" value="Pantothen_kinase_3"/>
    <property type="match status" value="1"/>
</dbReference>
<dbReference type="InterPro" id="IPR043129">
    <property type="entry name" value="ATPase_NBD"/>
</dbReference>
<dbReference type="InterPro" id="IPR004619">
    <property type="entry name" value="Type_III_PanK"/>
</dbReference>
<dbReference type="NCBIfam" id="TIGR00671">
    <property type="entry name" value="baf"/>
    <property type="match status" value="1"/>
</dbReference>
<dbReference type="NCBIfam" id="NF009849">
    <property type="entry name" value="PRK13320.1-1"/>
    <property type="match status" value="1"/>
</dbReference>
<dbReference type="PANTHER" id="PTHR34265">
    <property type="entry name" value="TYPE III PANTOTHENATE KINASE"/>
    <property type="match status" value="1"/>
</dbReference>
<dbReference type="PANTHER" id="PTHR34265:SF1">
    <property type="entry name" value="TYPE III PANTOTHENATE KINASE"/>
    <property type="match status" value="1"/>
</dbReference>
<dbReference type="Pfam" id="PF03309">
    <property type="entry name" value="Pan_kinase"/>
    <property type="match status" value="1"/>
</dbReference>
<dbReference type="SUPFAM" id="SSF53067">
    <property type="entry name" value="Actin-like ATPase domain"/>
    <property type="match status" value="2"/>
</dbReference>
<proteinExistence type="inferred from homology"/>
<feature type="chain" id="PRO_0000267508" description="Type III pantothenate kinase">
    <location>
        <begin position="1"/>
        <end position="266"/>
    </location>
</feature>
<feature type="active site" description="Proton acceptor" evidence="1">
    <location>
        <position position="114"/>
    </location>
</feature>
<feature type="binding site" evidence="1">
    <location>
        <begin position="15"/>
        <end position="22"/>
    </location>
    <ligand>
        <name>ATP</name>
        <dbReference type="ChEBI" id="CHEBI:30616"/>
    </ligand>
</feature>
<feature type="binding site" evidence="1">
    <location>
        <position position="105"/>
    </location>
    <ligand>
        <name>substrate</name>
    </ligand>
</feature>
<feature type="binding site" evidence="1">
    <location>
        <begin position="112"/>
        <end position="115"/>
    </location>
    <ligand>
        <name>substrate</name>
    </ligand>
</feature>
<feature type="binding site" evidence="1">
    <location>
        <position position="135"/>
    </location>
    <ligand>
        <name>K(+)</name>
        <dbReference type="ChEBI" id="CHEBI:29103"/>
    </ligand>
</feature>
<feature type="binding site" evidence="1">
    <location>
        <position position="138"/>
    </location>
    <ligand>
        <name>ATP</name>
        <dbReference type="ChEBI" id="CHEBI:30616"/>
    </ligand>
</feature>
<feature type="binding site" evidence="1">
    <location>
        <position position="191"/>
    </location>
    <ligand>
        <name>substrate</name>
    </ligand>
</feature>
<reference key="1">
    <citation type="submission" date="2005-08" db="EMBL/GenBank/DDBJ databases">
        <title>Complete sequence of Chlorobium chlorochromatii CaD3.</title>
        <authorList>
            <consortium name="US DOE Joint Genome Institute"/>
            <person name="Copeland A."/>
            <person name="Lucas S."/>
            <person name="Lapidus A."/>
            <person name="Barry K."/>
            <person name="Detter J.C."/>
            <person name="Glavina T."/>
            <person name="Hammon N."/>
            <person name="Israni S."/>
            <person name="Pitluck S."/>
            <person name="Bryant D."/>
            <person name="Schmutz J."/>
            <person name="Larimer F."/>
            <person name="Land M."/>
            <person name="Kyrpides N."/>
            <person name="Ivanova N."/>
            <person name="Richardson P."/>
        </authorList>
    </citation>
    <scope>NUCLEOTIDE SEQUENCE [LARGE SCALE GENOMIC DNA]</scope>
    <source>
        <strain>CaD3</strain>
    </source>
</reference>